<dbReference type="EC" id="2.7.7.77" evidence="1"/>
<dbReference type="EMBL" id="CP001032">
    <property type="protein sequence ID" value="ACB75026.1"/>
    <property type="molecule type" value="Genomic_DNA"/>
</dbReference>
<dbReference type="RefSeq" id="WP_012374563.1">
    <property type="nucleotide sequence ID" value="NC_010571.1"/>
</dbReference>
<dbReference type="SMR" id="B1ZVU0"/>
<dbReference type="STRING" id="452637.Oter_1742"/>
<dbReference type="KEGG" id="ote:Oter_1742"/>
<dbReference type="eggNOG" id="COG0746">
    <property type="taxonomic scope" value="Bacteria"/>
</dbReference>
<dbReference type="HOGENOM" id="CLU_055597_3_2_0"/>
<dbReference type="OrthoDB" id="9788394at2"/>
<dbReference type="Proteomes" id="UP000007013">
    <property type="component" value="Chromosome"/>
</dbReference>
<dbReference type="GO" id="GO:0005737">
    <property type="term" value="C:cytoplasm"/>
    <property type="evidence" value="ECO:0007669"/>
    <property type="project" value="UniProtKB-SubCell"/>
</dbReference>
<dbReference type="GO" id="GO:0005525">
    <property type="term" value="F:GTP binding"/>
    <property type="evidence" value="ECO:0007669"/>
    <property type="project" value="UniProtKB-UniRule"/>
</dbReference>
<dbReference type="GO" id="GO:0046872">
    <property type="term" value="F:metal ion binding"/>
    <property type="evidence" value="ECO:0007669"/>
    <property type="project" value="UniProtKB-KW"/>
</dbReference>
<dbReference type="GO" id="GO:0061603">
    <property type="term" value="F:molybdenum cofactor guanylyltransferase activity"/>
    <property type="evidence" value="ECO:0007669"/>
    <property type="project" value="UniProtKB-EC"/>
</dbReference>
<dbReference type="GO" id="GO:0006777">
    <property type="term" value="P:Mo-molybdopterin cofactor biosynthetic process"/>
    <property type="evidence" value="ECO:0007669"/>
    <property type="project" value="UniProtKB-KW"/>
</dbReference>
<dbReference type="CDD" id="cd02503">
    <property type="entry name" value="MobA"/>
    <property type="match status" value="1"/>
</dbReference>
<dbReference type="Gene3D" id="3.90.550.10">
    <property type="entry name" value="Spore Coat Polysaccharide Biosynthesis Protein SpsA, Chain A"/>
    <property type="match status" value="1"/>
</dbReference>
<dbReference type="HAMAP" id="MF_00316">
    <property type="entry name" value="MobA"/>
    <property type="match status" value="1"/>
</dbReference>
<dbReference type="InterPro" id="IPR025877">
    <property type="entry name" value="MobA-like_NTP_Trfase"/>
</dbReference>
<dbReference type="InterPro" id="IPR013482">
    <property type="entry name" value="Molybde_CF_guanTrfase"/>
</dbReference>
<dbReference type="InterPro" id="IPR029044">
    <property type="entry name" value="Nucleotide-diphossugar_trans"/>
</dbReference>
<dbReference type="PANTHER" id="PTHR19136">
    <property type="entry name" value="MOLYBDENUM COFACTOR GUANYLYLTRANSFERASE"/>
    <property type="match status" value="1"/>
</dbReference>
<dbReference type="PANTHER" id="PTHR19136:SF81">
    <property type="entry name" value="MOLYBDENUM COFACTOR GUANYLYLTRANSFERASE"/>
    <property type="match status" value="1"/>
</dbReference>
<dbReference type="Pfam" id="PF12804">
    <property type="entry name" value="NTP_transf_3"/>
    <property type="match status" value="1"/>
</dbReference>
<dbReference type="SUPFAM" id="SSF53448">
    <property type="entry name" value="Nucleotide-diphospho-sugar transferases"/>
    <property type="match status" value="1"/>
</dbReference>
<sequence length="202" mass="22349">MSANASALAGAVLAGGESRRMGRDKARLRLRGETLAQRQVRVLREAGAEPVVIVRRAEQRMSVRAVEQVCDEFVGAGPLAGVQAALKAAAAAGARWIAVLAVDMPAIEAAWFGDLRRACRKGKGAVVRHADGFEPLAAIYPINALATAERRLRRGERSMQRFVAALVRQRKMRVVALPEEERWRVANWNRPEDRDRERRKHA</sequence>
<reference key="1">
    <citation type="journal article" date="2011" name="J. Bacteriol.">
        <title>Genome sequence of the verrucomicrobium Opitutus terrae PB90-1, an abundant inhabitant of rice paddy soil ecosystems.</title>
        <authorList>
            <person name="van Passel M.W."/>
            <person name="Kant R."/>
            <person name="Palva A."/>
            <person name="Copeland A."/>
            <person name="Lucas S."/>
            <person name="Lapidus A."/>
            <person name="Glavina del Rio T."/>
            <person name="Pitluck S."/>
            <person name="Goltsman E."/>
            <person name="Clum A."/>
            <person name="Sun H."/>
            <person name="Schmutz J."/>
            <person name="Larimer F.W."/>
            <person name="Land M.L."/>
            <person name="Hauser L."/>
            <person name="Kyrpides N."/>
            <person name="Mikhailova N."/>
            <person name="Richardson P.P."/>
            <person name="Janssen P.H."/>
            <person name="de Vos W.M."/>
            <person name="Smidt H."/>
        </authorList>
    </citation>
    <scope>NUCLEOTIDE SEQUENCE [LARGE SCALE GENOMIC DNA]</scope>
    <source>
        <strain>DSM 11246 / JCM 15787 / PB90-1</strain>
    </source>
</reference>
<proteinExistence type="inferred from homology"/>
<keyword id="KW-0963">Cytoplasm</keyword>
<keyword id="KW-0342">GTP-binding</keyword>
<keyword id="KW-0460">Magnesium</keyword>
<keyword id="KW-0479">Metal-binding</keyword>
<keyword id="KW-0501">Molybdenum cofactor biosynthesis</keyword>
<keyword id="KW-0547">Nucleotide-binding</keyword>
<keyword id="KW-1185">Reference proteome</keyword>
<keyword id="KW-0808">Transferase</keyword>
<evidence type="ECO:0000255" key="1">
    <source>
        <dbReference type="HAMAP-Rule" id="MF_00316"/>
    </source>
</evidence>
<comment type="function">
    <text evidence="1">Transfers a GMP moiety from GTP to Mo-molybdopterin (Mo-MPT) cofactor (Moco or molybdenum cofactor) to form Mo-molybdopterin guanine dinucleotide (Mo-MGD) cofactor.</text>
</comment>
<comment type="catalytic activity">
    <reaction evidence="1">
        <text>Mo-molybdopterin + GTP + H(+) = Mo-molybdopterin guanine dinucleotide + diphosphate</text>
        <dbReference type="Rhea" id="RHEA:34243"/>
        <dbReference type="ChEBI" id="CHEBI:15378"/>
        <dbReference type="ChEBI" id="CHEBI:33019"/>
        <dbReference type="ChEBI" id="CHEBI:37565"/>
        <dbReference type="ChEBI" id="CHEBI:71302"/>
        <dbReference type="ChEBI" id="CHEBI:71310"/>
        <dbReference type="EC" id="2.7.7.77"/>
    </reaction>
</comment>
<comment type="cofactor">
    <cofactor evidence="1">
        <name>Mg(2+)</name>
        <dbReference type="ChEBI" id="CHEBI:18420"/>
    </cofactor>
</comment>
<comment type="subcellular location">
    <subcellularLocation>
        <location evidence="1">Cytoplasm</location>
    </subcellularLocation>
</comment>
<comment type="domain">
    <text evidence="1">The N-terminal domain determines nucleotide recognition and specific binding, while the C-terminal domain determines the specific binding to the target protein.</text>
</comment>
<comment type="similarity">
    <text evidence="1">Belongs to the MobA family.</text>
</comment>
<organism>
    <name type="scientific">Opitutus terrae (strain DSM 11246 / JCM 15787 / PB90-1)</name>
    <dbReference type="NCBI Taxonomy" id="452637"/>
    <lineage>
        <taxon>Bacteria</taxon>
        <taxon>Pseudomonadati</taxon>
        <taxon>Verrucomicrobiota</taxon>
        <taxon>Opitutia</taxon>
        <taxon>Opitutales</taxon>
        <taxon>Opitutaceae</taxon>
        <taxon>Opitutus</taxon>
    </lineage>
</organism>
<protein>
    <recommendedName>
        <fullName evidence="1">Probable molybdenum cofactor guanylyltransferase</fullName>
        <shortName evidence="1">MoCo guanylyltransferase</shortName>
        <ecNumber evidence="1">2.7.7.77</ecNumber>
    </recommendedName>
    <alternativeName>
        <fullName evidence="1">GTP:molybdopterin guanylyltransferase</fullName>
    </alternativeName>
    <alternativeName>
        <fullName evidence="1">Mo-MPT guanylyltransferase</fullName>
    </alternativeName>
    <alternativeName>
        <fullName evidence="1">Molybdopterin guanylyltransferase</fullName>
    </alternativeName>
    <alternativeName>
        <fullName evidence="1">Molybdopterin-guanine dinucleotide synthase</fullName>
        <shortName evidence="1">MGD synthase</shortName>
    </alternativeName>
</protein>
<feature type="chain" id="PRO_1000205077" description="Probable molybdenum cofactor guanylyltransferase">
    <location>
        <begin position="1"/>
        <end position="202"/>
    </location>
</feature>
<feature type="binding site" evidence="1">
    <location>
        <begin position="13"/>
        <end position="15"/>
    </location>
    <ligand>
        <name>GTP</name>
        <dbReference type="ChEBI" id="CHEBI:37565"/>
    </ligand>
</feature>
<feature type="binding site" evidence="1">
    <location>
        <position position="25"/>
    </location>
    <ligand>
        <name>GTP</name>
        <dbReference type="ChEBI" id="CHEBI:37565"/>
    </ligand>
</feature>
<feature type="binding site" evidence="1">
    <location>
        <position position="71"/>
    </location>
    <ligand>
        <name>GTP</name>
        <dbReference type="ChEBI" id="CHEBI:37565"/>
    </ligand>
</feature>
<feature type="binding site" evidence="1">
    <location>
        <position position="103"/>
    </location>
    <ligand>
        <name>GTP</name>
        <dbReference type="ChEBI" id="CHEBI:37565"/>
    </ligand>
</feature>
<feature type="binding site" evidence="1">
    <location>
        <position position="103"/>
    </location>
    <ligand>
        <name>Mg(2+)</name>
        <dbReference type="ChEBI" id="CHEBI:18420"/>
    </ligand>
</feature>
<gene>
    <name evidence="1" type="primary">mobA</name>
    <name type="ordered locus">Oter_1742</name>
</gene>
<accession>B1ZVU0</accession>
<name>MOBA_OPITP</name>